<sequence>MSQPFDASAFLATCSGRPGVYRMFDAEARLLYVGKAKNLKKRLASYFRKTGLAPKTAALVGRIAQVETTITANETEALLLEQTLIKEWRPPYNILLRDDKSYPYVFLSDGEFPRLGIHRGAKKAKGRYFGPYPSAGAIRESLSLLQKAFSVRQCEDSYYANRTRPCLQYQIKRCKGPCVGLVTPEEYAEDVRHSVMFLEGRSQQLGNELNAEMEKAAMALNFEKAAELRDQIALLRRVQDQQYMEGGSGDVDVVAAFVNPGGACVHLISVRGGRVLGSKNFFPQVGIEEEVAEVMAAFLSQYYLGNAERELPGELIVNVVHEDFDAITEAVQTLRGRELSISHRVRGTRARWQQLAVTNAEQALNARLANRQHMAARFEALAQVLDLDEVPQRLECYDISHSSGEATVASCVVFGPEGPLKSDYRRFNIEGVTAGDDYAAMHQALQRRYGRIKDGEGKLPDVLLVDGGKGQLNMARDVMQELGFGDLTLLGVAKGVTRKAGFETLYLNDVAHEFTLKGDSPALHLIQQIRDEAHRFAITGHRARRGKARRTSSLEDVAGVGPKRRRDLLKHFGGLQELNRASIDEIAKAPGISKKLAESIYASLHSE</sequence>
<comment type="function">
    <text evidence="1">The UvrABC repair system catalyzes the recognition and processing of DNA lesions. UvrC both incises the 5' and 3' sides of the lesion. The N-terminal half is responsible for the 3' incision and the C-terminal half is responsible for the 5' incision.</text>
</comment>
<comment type="subunit">
    <text evidence="1">Interacts with UvrB in an incision complex.</text>
</comment>
<comment type="subcellular location">
    <subcellularLocation>
        <location evidence="1">Cytoplasm</location>
    </subcellularLocation>
</comment>
<comment type="similarity">
    <text evidence="1">Belongs to the UvrC family.</text>
</comment>
<feature type="chain" id="PRO_1000077820" description="UvrABC system protein C">
    <location>
        <begin position="1"/>
        <end position="607"/>
    </location>
</feature>
<feature type="domain" description="GIY-YIG" evidence="1">
    <location>
        <begin position="16"/>
        <end position="94"/>
    </location>
</feature>
<feature type="domain" description="UVR" evidence="1">
    <location>
        <begin position="203"/>
        <end position="238"/>
    </location>
</feature>
<proteinExistence type="inferred from homology"/>
<dbReference type="EMBL" id="CT573326">
    <property type="protein sequence ID" value="CAK16195.1"/>
    <property type="molecule type" value="Genomic_DNA"/>
</dbReference>
<dbReference type="RefSeq" id="WP_011534582.1">
    <property type="nucleotide sequence ID" value="NC_008027.1"/>
</dbReference>
<dbReference type="SMR" id="Q1I833"/>
<dbReference type="STRING" id="384676.PSEEN3449"/>
<dbReference type="GeneID" id="32806526"/>
<dbReference type="KEGG" id="pen:PSEEN3449"/>
<dbReference type="eggNOG" id="COG0322">
    <property type="taxonomic scope" value="Bacteria"/>
</dbReference>
<dbReference type="HOGENOM" id="CLU_014841_3_0_6"/>
<dbReference type="OrthoDB" id="9804933at2"/>
<dbReference type="Proteomes" id="UP000000658">
    <property type="component" value="Chromosome"/>
</dbReference>
<dbReference type="GO" id="GO:0005737">
    <property type="term" value="C:cytoplasm"/>
    <property type="evidence" value="ECO:0007669"/>
    <property type="project" value="UniProtKB-SubCell"/>
</dbReference>
<dbReference type="GO" id="GO:0009380">
    <property type="term" value="C:excinuclease repair complex"/>
    <property type="evidence" value="ECO:0007669"/>
    <property type="project" value="InterPro"/>
</dbReference>
<dbReference type="GO" id="GO:0003677">
    <property type="term" value="F:DNA binding"/>
    <property type="evidence" value="ECO:0007669"/>
    <property type="project" value="UniProtKB-UniRule"/>
</dbReference>
<dbReference type="GO" id="GO:0009381">
    <property type="term" value="F:excinuclease ABC activity"/>
    <property type="evidence" value="ECO:0007669"/>
    <property type="project" value="UniProtKB-UniRule"/>
</dbReference>
<dbReference type="GO" id="GO:0006289">
    <property type="term" value="P:nucleotide-excision repair"/>
    <property type="evidence" value="ECO:0007669"/>
    <property type="project" value="UniProtKB-UniRule"/>
</dbReference>
<dbReference type="GO" id="GO:0009432">
    <property type="term" value="P:SOS response"/>
    <property type="evidence" value="ECO:0007669"/>
    <property type="project" value="UniProtKB-UniRule"/>
</dbReference>
<dbReference type="CDD" id="cd10434">
    <property type="entry name" value="GIY-YIG_UvrC_Cho"/>
    <property type="match status" value="1"/>
</dbReference>
<dbReference type="FunFam" id="1.10.150.20:FF:000005">
    <property type="entry name" value="UvrABC system protein C"/>
    <property type="match status" value="1"/>
</dbReference>
<dbReference type="FunFam" id="3.30.420.340:FF:000001">
    <property type="entry name" value="UvrABC system protein C"/>
    <property type="match status" value="1"/>
</dbReference>
<dbReference type="FunFam" id="3.40.1440.10:FF:000001">
    <property type="entry name" value="UvrABC system protein C"/>
    <property type="match status" value="1"/>
</dbReference>
<dbReference type="Gene3D" id="1.10.150.20">
    <property type="entry name" value="5' to 3' exonuclease, C-terminal subdomain"/>
    <property type="match status" value="1"/>
</dbReference>
<dbReference type="Gene3D" id="3.40.1440.10">
    <property type="entry name" value="GIY-YIG endonuclease"/>
    <property type="match status" value="1"/>
</dbReference>
<dbReference type="Gene3D" id="4.10.860.10">
    <property type="entry name" value="UVR domain"/>
    <property type="match status" value="1"/>
</dbReference>
<dbReference type="Gene3D" id="3.30.420.340">
    <property type="entry name" value="UvrC, RNAse H endonuclease domain"/>
    <property type="match status" value="1"/>
</dbReference>
<dbReference type="HAMAP" id="MF_00203">
    <property type="entry name" value="UvrC"/>
    <property type="match status" value="1"/>
</dbReference>
<dbReference type="InterPro" id="IPR000305">
    <property type="entry name" value="GIY-YIG_endonuc"/>
</dbReference>
<dbReference type="InterPro" id="IPR035901">
    <property type="entry name" value="GIY-YIG_endonuc_sf"/>
</dbReference>
<dbReference type="InterPro" id="IPR047296">
    <property type="entry name" value="GIY-YIG_UvrC_Cho"/>
</dbReference>
<dbReference type="InterPro" id="IPR003583">
    <property type="entry name" value="Hlx-hairpin-Hlx_DNA-bd_motif"/>
</dbReference>
<dbReference type="InterPro" id="IPR010994">
    <property type="entry name" value="RuvA_2-like"/>
</dbReference>
<dbReference type="InterPro" id="IPR001943">
    <property type="entry name" value="UVR_dom"/>
</dbReference>
<dbReference type="InterPro" id="IPR036876">
    <property type="entry name" value="UVR_dom_sf"/>
</dbReference>
<dbReference type="InterPro" id="IPR050066">
    <property type="entry name" value="UvrABC_protein_C"/>
</dbReference>
<dbReference type="InterPro" id="IPR004791">
    <property type="entry name" value="UvrC"/>
</dbReference>
<dbReference type="InterPro" id="IPR001162">
    <property type="entry name" value="UvrC_RNase_H_dom"/>
</dbReference>
<dbReference type="InterPro" id="IPR038476">
    <property type="entry name" value="UvrC_RNase_H_dom_sf"/>
</dbReference>
<dbReference type="NCBIfam" id="NF001824">
    <property type="entry name" value="PRK00558.1-5"/>
    <property type="match status" value="1"/>
</dbReference>
<dbReference type="NCBIfam" id="TIGR00194">
    <property type="entry name" value="uvrC"/>
    <property type="match status" value="1"/>
</dbReference>
<dbReference type="PANTHER" id="PTHR30562:SF1">
    <property type="entry name" value="UVRABC SYSTEM PROTEIN C"/>
    <property type="match status" value="1"/>
</dbReference>
<dbReference type="PANTHER" id="PTHR30562">
    <property type="entry name" value="UVRC/OXIDOREDUCTASE"/>
    <property type="match status" value="1"/>
</dbReference>
<dbReference type="Pfam" id="PF01541">
    <property type="entry name" value="GIY-YIG"/>
    <property type="match status" value="1"/>
</dbReference>
<dbReference type="Pfam" id="PF14520">
    <property type="entry name" value="HHH_5"/>
    <property type="match status" value="1"/>
</dbReference>
<dbReference type="Pfam" id="PF02151">
    <property type="entry name" value="UVR"/>
    <property type="match status" value="1"/>
</dbReference>
<dbReference type="Pfam" id="PF22920">
    <property type="entry name" value="UvrC_RNaseH"/>
    <property type="match status" value="1"/>
</dbReference>
<dbReference type="Pfam" id="PF08459">
    <property type="entry name" value="UvrC_RNaseH_dom"/>
    <property type="match status" value="1"/>
</dbReference>
<dbReference type="SMART" id="SM00465">
    <property type="entry name" value="GIYc"/>
    <property type="match status" value="1"/>
</dbReference>
<dbReference type="SMART" id="SM00278">
    <property type="entry name" value="HhH1"/>
    <property type="match status" value="2"/>
</dbReference>
<dbReference type="SUPFAM" id="SSF46600">
    <property type="entry name" value="C-terminal UvrC-binding domain of UvrB"/>
    <property type="match status" value="1"/>
</dbReference>
<dbReference type="SUPFAM" id="SSF82771">
    <property type="entry name" value="GIY-YIG endonuclease"/>
    <property type="match status" value="1"/>
</dbReference>
<dbReference type="SUPFAM" id="SSF47781">
    <property type="entry name" value="RuvA domain 2-like"/>
    <property type="match status" value="1"/>
</dbReference>
<dbReference type="PROSITE" id="PS50164">
    <property type="entry name" value="GIY_YIG"/>
    <property type="match status" value="1"/>
</dbReference>
<dbReference type="PROSITE" id="PS50151">
    <property type="entry name" value="UVR"/>
    <property type="match status" value="1"/>
</dbReference>
<dbReference type="PROSITE" id="PS50165">
    <property type="entry name" value="UVRC"/>
    <property type="match status" value="1"/>
</dbReference>
<evidence type="ECO:0000255" key="1">
    <source>
        <dbReference type="HAMAP-Rule" id="MF_00203"/>
    </source>
</evidence>
<organism>
    <name type="scientific">Pseudomonas entomophila (strain L48)</name>
    <dbReference type="NCBI Taxonomy" id="384676"/>
    <lineage>
        <taxon>Bacteria</taxon>
        <taxon>Pseudomonadati</taxon>
        <taxon>Pseudomonadota</taxon>
        <taxon>Gammaproteobacteria</taxon>
        <taxon>Pseudomonadales</taxon>
        <taxon>Pseudomonadaceae</taxon>
        <taxon>Pseudomonas</taxon>
    </lineage>
</organism>
<protein>
    <recommendedName>
        <fullName evidence="1">UvrABC system protein C</fullName>
        <shortName evidence="1">Protein UvrC</shortName>
    </recommendedName>
    <alternativeName>
        <fullName evidence="1">Excinuclease ABC subunit C</fullName>
    </alternativeName>
</protein>
<keyword id="KW-0963">Cytoplasm</keyword>
<keyword id="KW-0227">DNA damage</keyword>
<keyword id="KW-0228">DNA excision</keyword>
<keyword id="KW-0234">DNA repair</keyword>
<keyword id="KW-0267">Excision nuclease</keyword>
<keyword id="KW-0742">SOS response</keyword>
<name>UVRC_PSEE4</name>
<reference key="1">
    <citation type="journal article" date="2006" name="Nat. Biotechnol.">
        <title>Complete genome sequence of the entomopathogenic and metabolically versatile soil bacterium Pseudomonas entomophila.</title>
        <authorList>
            <person name="Vodovar N."/>
            <person name="Vallenet D."/>
            <person name="Cruveiller S."/>
            <person name="Rouy Z."/>
            <person name="Barbe V."/>
            <person name="Acosta C."/>
            <person name="Cattolico L."/>
            <person name="Jubin C."/>
            <person name="Lajus A."/>
            <person name="Segurens B."/>
            <person name="Vacherie B."/>
            <person name="Wincker P."/>
            <person name="Weissenbach J."/>
            <person name="Lemaitre B."/>
            <person name="Medigue C."/>
            <person name="Boccard F."/>
        </authorList>
    </citation>
    <scope>NUCLEOTIDE SEQUENCE [LARGE SCALE GENOMIC DNA]</scope>
    <source>
        <strain>L48</strain>
    </source>
</reference>
<gene>
    <name evidence="1" type="primary">uvrC</name>
    <name type="ordered locus">PSEEN3449</name>
</gene>
<accession>Q1I833</accession>